<comment type="function">
    <text evidence="1">Implicated in the level of global muscle contraction and cardiac function. Phosphorylates a specific serine in the N-terminus of a myosin light chain (By similarity).</text>
</comment>
<comment type="catalytic activity">
    <reaction>
        <text>L-seryl-[myosin light chain] + ATP = O-phospho-L-seryl-[myosin light chain] + ADP + H(+)</text>
        <dbReference type="Rhea" id="RHEA:22004"/>
        <dbReference type="Rhea" id="RHEA-COMP:13684"/>
        <dbReference type="Rhea" id="RHEA-COMP:13685"/>
        <dbReference type="ChEBI" id="CHEBI:15378"/>
        <dbReference type="ChEBI" id="CHEBI:29999"/>
        <dbReference type="ChEBI" id="CHEBI:30616"/>
        <dbReference type="ChEBI" id="CHEBI:83421"/>
        <dbReference type="ChEBI" id="CHEBI:456216"/>
        <dbReference type="EC" id="2.7.11.18"/>
    </reaction>
</comment>
<comment type="catalytic activity">
    <reaction>
        <text>L-threonyl-[myosin light chain] + ATP = O-phospho-L-threonyl-[myosin light chain] + ADP + H(+)</text>
        <dbReference type="Rhea" id="RHEA:53900"/>
        <dbReference type="Rhea" id="RHEA-COMP:13686"/>
        <dbReference type="Rhea" id="RHEA-COMP:13687"/>
        <dbReference type="ChEBI" id="CHEBI:15378"/>
        <dbReference type="ChEBI" id="CHEBI:30013"/>
        <dbReference type="ChEBI" id="CHEBI:30616"/>
        <dbReference type="ChEBI" id="CHEBI:61977"/>
        <dbReference type="ChEBI" id="CHEBI:456216"/>
        <dbReference type="EC" id="2.7.11.18"/>
    </reaction>
</comment>
<comment type="subunit">
    <text evidence="1">May interact with centrin.</text>
</comment>
<comment type="subcellular location">
    <subcellularLocation>
        <location evidence="1">Cytoplasm</location>
    </subcellularLocation>
    <text evidence="1">Colocalizes with phosphorylated myosin light chain (RLCP) at filaments of the myofibrils.</text>
</comment>
<comment type="similarity">
    <text evidence="8">Belongs to the protein kinase superfamily. CAMK Ser/Thr protein kinase family.</text>
</comment>
<sequence length="623" mass="67243">MATENGAVELEIPSSSTDTAPKAAAGEGPPAAEKDPGPPDPQKDPGPPDPEKDAGPPNPEKELESPDPKKEPDPDSTKDTEAPAPEKGDGASAQPSASSQGPEGEGGLQGEPAEGSAGQPAALPQETATAEASVKKPEAEQGTPGSQDPGEAKEQKKVAEGQAPSKKGSPAFLHSPSCPAAISSLEKPLAEKPLDETLELIFEGVPVTPGPTETEPAKVAEGEKNLPGGSQKEGEEKAAGHAGQDGVQGDTSRGIEFQAVPSERSEVGQALSPTAKEEDCFQILDDCPPPPAPFPHRIVELRPGNINSQFSLNSKEALGGGKFGAVCTCTEKATGLKLAAKVIKKQTPKDKEMVLLEIEVMNQLNHRNLIQLYAAIETPHEIVLFMEYIEGGELFERIVDEDYQLTEVDTMVFVRQICDGILFMHKMRVLHLDLKPENILCVNTTGHLVKIIDFGLARRYNPNEKLKVNFGTPEFLSPEVVNYDQISDKTDMWSLGVITYMLLSGLSPFLGDDDTETLNNVLSSNWYFDEETFEAVSDEAKDFVSNLIVKDQRARMSAAQCLAHPWLNNLAEKAKRCNRRLKSQILLKKYLMKRRWKKNFIAVSAANRFKKISSSGALMALGV</sequence>
<evidence type="ECO:0000250" key="1"/>
<evidence type="ECO:0000250" key="2">
    <source>
        <dbReference type="UniProtKB" id="P07313"/>
    </source>
</evidence>
<evidence type="ECO:0000250" key="3">
    <source>
        <dbReference type="UniProtKB" id="P20689"/>
    </source>
</evidence>
<evidence type="ECO:0000250" key="4">
    <source>
        <dbReference type="UniProtKB" id="Q8VCR8"/>
    </source>
</evidence>
<evidence type="ECO:0000255" key="5">
    <source>
        <dbReference type="PROSITE-ProRule" id="PRU00159"/>
    </source>
</evidence>
<evidence type="ECO:0000255" key="6">
    <source>
        <dbReference type="PROSITE-ProRule" id="PRU10027"/>
    </source>
</evidence>
<evidence type="ECO:0000256" key="7">
    <source>
        <dbReference type="SAM" id="MobiDB-lite"/>
    </source>
</evidence>
<evidence type="ECO:0000305" key="8"/>
<keyword id="KW-0002">3D-structure</keyword>
<keyword id="KW-0007">Acetylation</keyword>
<keyword id="KW-0067">ATP-binding</keyword>
<keyword id="KW-0112">Calmodulin-binding</keyword>
<keyword id="KW-0963">Cytoplasm</keyword>
<keyword id="KW-0418">Kinase</keyword>
<keyword id="KW-0547">Nucleotide-binding</keyword>
<keyword id="KW-0597">Phosphoprotein</keyword>
<keyword id="KW-1185">Reference proteome</keyword>
<keyword id="KW-0723">Serine/threonine-protein kinase</keyword>
<keyword id="KW-0808">Transferase</keyword>
<accession>A4IFM7</accession>
<gene>
    <name type="primary">MYLK2</name>
</gene>
<feature type="initiator methionine" description="Removed" evidence="2">
    <location>
        <position position="1"/>
    </location>
</feature>
<feature type="chain" id="PRO_0000295167" description="Myosin light chain kinase 2, skeletal/cardiac muscle">
    <location>
        <begin position="2"/>
        <end position="623"/>
    </location>
</feature>
<feature type="domain" description="Protein kinase" evidence="5">
    <location>
        <begin position="312"/>
        <end position="567"/>
    </location>
</feature>
<feature type="region of interest" description="Disordered" evidence="7">
    <location>
        <begin position="1"/>
        <end position="179"/>
    </location>
</feature>
<feature type="region of interest" description="Disordered" evidence="7">
    <location>
        <begin position="204"/>
        <end position="251"/>
    </location>
</feature>
<feature type="region of interest" description="Calmodulin-binding" evidence="1">
    <location>
        <begin position="601"/>
        <end position="613"/>
    </location>
</feature>
<feature type="compositionally biased region" description="Low complexity" evidence="7">
    <location>
        <begin position="20"/>
        <end position="31"/>
    </location>
</feature>
<feature type="compositionally biased region" description="Basic and acidic residues" evidence="7">
    <location>
        <begin position="32"/>
        <end position="43"/>
    </location>
</feature>
<feature type="compositionally biased region" description="Basic and acidic residues" evidence="7">
    <location>
        <begin position="49"/>
        <end position="89"/>
    </location>
</feature>
<feature type="compositionally biased region" description="Low complexity" evidence="7">
    <location>
        <begin position="90"/>
        <end position="102"/>
    </location>
</feature>
<feature type="compositionally biased region" description="Basic and acidic residues" evidence="7">
    <location>
        <begin position="150"/>
        <end position="159"/>
    </location>
</feature>
<feature type="compositionally biased region" description="Low complexity" evidence="7">
    <location>
        <begin position="204"/>
        <end position="214"/>
    </location>
</feature>
<feature type="compositionally biased region" description="Basic and acidic residues" evidence="7">
    <location>
        <begin position="215"/>
        <end position="224"/>
    </location>
</feature>
<feature type="active site" description="Proton acceptor" evidence="5 6">
    <location>
        <position position="433"/>
    </location>
</feature>
<feature type="binding site" evidence="5">
    <location>
        <begin position="318"/>
        <end position="326"/>
    </location>
    <ligand>
        <name>ATP</name>
        <dbReference type="ChEBI" id="CHEBI:30616"/>
    </ligand>
</feature>
<feature type="binding site" evidence="5">
    <location>
        <position position="341"/>
    </location>
    <ligand>
        <name>ATP</name>
        <dbReference type="ChEBI" id="CHEBI:30616"/>
    </ligand>
</feature>
<feature type="modified residue" description="N-acetylalanine" evidence="2">
    <location>
        <position position="2"/>
    </location>
</feature>
<feature type="modified residue" description="Phosphoserine" evidence="4">
    <location>
        <position position="169"/>
    </location>
</feature>
<feature type="modified residue" description="Phosphoserine" evidence="4">
    <location>
        <position position="175"/>
    </location>
</feature>
<feature type="modified residue" description="Phosphoserine" evidence="4">
    <location>
        <position position="177"/>
    </location>
</feature>
<feature type="modified residue" description="Phosphothreonine" evidence="3">
    <location>
        <position position="472"/>
    </location>
</feature>
<dbReference type="EC" id="2.7.11.18"/>
<dbReference type="EMBL" id="BC134664">
    <property type="protein sequence ID" value="AAI34665.1"/>
    <property type="molecule type" value="mRNA"/>
</dbReference>
<dbReference type="RefSeq" id="NP_001077188.1">
    <property type="nucleotide sequence ID" value="NM_001083719.1"/>
</dbReference>
<dbReference type="RefSeq" id="NP_001422058.1">
    <property type="nucleotide sequence ID" value="NM_001435129.1"/>
</dbReference>
<dbReference type="RefSeq" id="XP_005214824.1">
    <property type="nucleotide sequence ID" value="XM_005214767.3"/>
</dbReference>
<dbReference type="RefSeq" id="XP_005214826.1">
    <property type="nucleotide sequence ID" value="XM_005214769.5"/>
</dbReference>
<dbReference type="RefSeq" id="XP_010809800.1">
    <property type="nucleotide sequence ID" value="XM_010811498.3"/>
</dbReference>
<dbReference type="PDB" id="9D0T">
    <property type="method" value="EM"/>
    <property type="resolution" value="2.84 A"/>
    <property type="chains" value="P=593-618"/>
</dbReference>
<dbReference type="PDBsum" id="9D0T"/>
<dbReference type="BMRB" id="A4IFM7"/>
<dbReference type="EMDB" id="EMD-46461"/>
<dbReference type="SMR" id="A4IFM7"/>
<dbReference type="FunCoup" id="A4IFM7">
    <property type="interactions" value="364"/>
</dbReference>
<dbReference type="STRING" id="9913.ENSBTAP00000063850"/>
<dbReference type="PaxDb" id="9913-ENSBTAP00000019875"/>
<dbReference type="Ensembl" id="ENSBTAT00000019875.5">
    <property type="protein sequence ID" value="ENSBTAP00000019875.4"/>
    <property type="gene ID" value="ENSBTAG00000014930.6"/>
</dbReference>
<dbReference type="GeneID" id="533378"/>
<dbReference type="KEGG" id="bta:533378"/>
<dbReference type="CTD" id="85366"/>
<dbReference type="VEuPathDB" id="HostDB:ENSBTAG00000014930"/>
<dbReference type="VGNC" id="VGNC:31806">
    <property type="gene designation" value="MYLK2"/>
</dbReference>
<dbReference type="eggNOG" id="KOG0032">
    <property type="taxonomic scope" value="Eukaryota"/>
</dbReference>
<dbReference type="GeneTree" id="ENSGT00940000161489"/>
<dbReference type="HOGENOM" id="CLU_000288_90_1_1"/>
<dbReference type="InParanoid" id="A4IFM7"/>
<dbReference type="OMA" id="VVMAVWF"/>
<dbReference type="OrthoDB" id="6070751at2759"/>
<dbReference type="TreeFam" id="TF314166"/>
<dbReference type="Proteomes" id="UP000009136">
    <property type="component" value="Chromosome 13"/>
</dbReference>
<dbReference type="Bgee" id="ENSBTAG00000014930">
    <property type="expression patterns" value="Expressed in infraspinatus muscle and 56 other cell types or tissues"/>
</dbReference>
<dbReference type="GO" id="GO:0005737">
    <property type="term" value="C:cytoplasm"/>
    <property type="evidence" value="ECO:0000318"/>
    <property type="project" value="GO_Central"/>
</dbReference>
<dbReference type="GO" id="GO:0005524">
    <property type="term" value="F:ATP binding"/>
    <property type="evidence" value="ECO:0007669"/>
    <property type="project" value="UniProtKB-KW"/>
</dbReference>
<dbReference type="GO" id="GO:0005516">
    <property type="term" value="F:calmodulin binding"/>
    <property type="evidence" value="ECO:0007669"/>
    <property type="project" value="UniProtKB-KW"/>
</dbReference>
<dbReference type="GO" id="GO:0032027">
    <property type="term" value="F:myosin light chain binding"/>
    <property type="evidence" value="ECO:0000318"/>
    <property type="project" value="GO_Central"/>
</dbReference>
<dbReference type="GO" id="GO:0004687">
    <property type="term" value="F:myosin light chain kinase activity"/>
    <property type="evidence" value="ECO:0000318"/>
    <property type="project" value="GO_Central"/>
</dbReference>
<dbReference type="GO" id="GO:0055008">
    <property type="term" value="P:cardiac muscle tissue morphogenesis"/>
    <property type="evidence" value="ECO:0000318"/>
    <property type="project" value="GO_Central"/>
</dbReference>
<dbReference type="GO" id="GO:0007165">
    <property type="term" value="P:signal transduction"/>
    <property type="evidence" value="ECO:0000318"/>
    <property type="project" value="GO_Central"/>
</dbReference>
<dbReference type="GO" id="GO:0006941">
    <property type="term" value="P:striated muscle contraction"/>
    <property type="evidence" value="ECO:0000318"/>
    <property type="project" value="GO_Central"/>
</dbReference>
<dbReference type="CDD" id="cd14190">
    <property type="entry name" value="STKc_MLCK2"/>
    <property type="match status" value="1"/>
</dbReference>
<dbReference type="FunFam" id="3.30.200.20:FF:000359">
    <property type="entry name" value="myosin light chain kinase 2, skeletal/cardiac muscle"/>
    <property type="match status" value="1"/>
</dbReference>
<dbReference type="FunFam" id="1.10.510.10:FF:000135">
    <property type="entry name" value="Putative myosin light chain kinase 3"/>
    <property type="match status" value="1"/>
</dbReference>
<dbReference type="Gene3D" id="3.30.200.20">
    <property type="entry name" value="Phosphorylase Kinase, domain 1"/>
    <property type="match status" value="1"/>
</dbReference>
<dbReference type="Gene3D" id="1.10.510.10">
    <property type="entry name" value="Transferase(Phosphotransferase) domain 1"/>
    <property type="match status" value="1"/>
</dbReference>
<dbReference type="InterPro" id="IPR011009">
    <property type="entry name" value="Kinase-like_dom_sf"/>
</dbReference>
<dbReference type="InterPro" id="IPR042717">
    <property type="entry name" value="MLCK2_STKc"/>
</dbReference>
<dbReference type="InterPro" id="IPR000719">
    <property type="entry name" value="Prot_kinase_dom"/>
</dbReference>
<dbReference type="InterPro" id="IPR017441">
    <property type="entry name" value="Protein_kinase_ATP_BS"/>
</dbReference>
<dbReference type="InterPro" id="IPR008271">
    <property type="entry name" value="Ser/Thr_kinase_AS"/>
</dbReference>
<dbReference type="PANTHER" id="PTHR24347">
    <property type="entry name" value="SERINE/THREONINE-PROTEIN KINASE"/>
    <property type="match status" value="1"/>
</dbReference>
<dbReference type="Pfam" id="PF00069">
    <property type="entry name" value="Pkinase"/>
    <property type="match status" value="1"/>
</dbReference>
<dbReference type="SMART" id="SM00220">
    <property type="entry name" value="S_TKc"/>
    <property type="match status" value="1"/>
</dbReference>
<dbReference type="SUPFAM" id="SSF56112">
    <property type="entry name" value="Protein kinase-like (PK-like)"/>
    <property type="match status" value="1"/>
</dbReference>
<dbReference type="PROSITE" id="PS00107">
    <property type="entry name" value="PROTEIN_KINASE_ATP"/>
    <property type="match status" value="1"/>
</dbReference>
<dbReference type="PROSITE" id="PS50011">
    <property type="entry name" value="PROTEIN_KINASE_DOM"/>
    <property type="match status" value="1"/>
</dbReference>
<dbReference type="PROSITE" id="PS00108">
    <property type="entry name" value="PROTEIN_KINASE_ST"/>
    <property type="match status" value="1"/>
</dbReference>
<reference key="1">
    <citation type="submission" date="2007-03" db="EMBL/GenBank/DDBJ databases">
        <authorList>
            <consortium name="NIH - Mammalian Gene Collection (MGC) project"/>
        </authorList>
    </citation>
    <scope>NUCLEOTIDE SEQUENCE [LARGE SCALE MRNA]</scope>
    <source>
        <strain>Hereford</strain>
        <tissue>Fetal muscle</tissue>
    </source>
</reference>
<name>MYLK2_BOVIN</name>
<proteinExistence type="evidence at protein level"/>
<organism>
    <name type="scientific">Bos taurus</name>
    <name type="common">Bovine</name>
    <dbReference type="NCBI Taxonomy" id="9913"/>
    <lineage>
        <taxon>Eukaryota</taxon>
        <taxon>Metazoa</taxon>
        <taxon>Chordata</taxon>
        <taxon>Craniata</taxon>
        <taxon>Vertebrata</taxon>
        <taxon>Euteleostomi</taxon>
        <taxon>Mammalia</taxon>
        <taxon>Eutheria</taxon>
        <taxon>Laurasiatheria</taxon>
        <taxon>Artiodactyla</taxon>
        <taxon>Ruminantia</taxon>
        <taxon>Pecora</taxon>
        <taxon>Bovidae</taxon>
        <taxon>Bovinae</taxon>
        <taxon>Bos</taxon>
    </lineage>
</organism>
<protein>
    <recommendedName>
        <fullName>Myosin light chain kinase 2, skeletal/cardiac muscle</fullName>
        <shortName>MLCK2</shortName>
        <ecNumber>2.7.11.18</ecNumber>
    </recommendedName>
</protein>